<proteinExistence type="inferred from homology"/>
<evidence type="ECO:0000255" key="1">
    <source>
        <dbReference type="HAMAP-Rule" id="MF_00503"/>
    </source>
</evidence>
<evidence type="ECO:0000305" key="2"/>
<feature type="chain" id="PRO_0000236507" description="Large ribosomal subunit protein bL9">
    <location>
        <begin position="1"/>
        <end position="149"/>
    </location>
</feature>
<gene>
    <name evidence="1" type="primary">rplI</name>
    <name type="ordered locus">CV_3637</name>
</gene>
<comment type="function">
    <text evidence="1">Binds to the 23S rRNA.</text>
</comment>
<comment type="similarity">
    <text evidence="1">Belongs to the bacterial ribosomal protein bL9 family.</text>
</comment>
<dbReference type="EMBL" id="AE016825">
    <property type="protein sequence ID" value="AAQ61299.1"/>
    <property type="molecule type" value="Genomic_DNA"/>
</dbReference>
<dbReference type="RefSeq" id="WP_011137184.1">
    <property type="nucleotide sequence ID" value="NC_005085.1"/>
</dbReference>
<dbReference type="SMR" id="Q7NRZ0"/>
<dbReference type="STRING" id="243365.CV_3637"/>
<dbReference type="GeneID" id="66364870"/>
<dbReference type="KEGG" id="cvi:CV_3637"/>
<dbReference type="eggNOG" id="COG0359">
    <property type="taxonomic scope" value="Bacteria"/>
</dbReference>
<dbReference type="HOGENOM" id="CLU_078938_4_1_4"/>
<dbReference type="OrthoDB" id="9788336at2"/>
<dbReference type="Proteomes" id="UP000001424">
    <property type="component" value="Chromosome"/>
</dbReference>
<dbReference type="GO" id="GO:1990904">
    <property type="term" value="C:ribonucleoprotein complex"/>
    <property type="evidence" value="ECO:0007669"/>
    <property type="project" value="UniProtKB-KW"/>
</dbReference>
<dbReference type="GO" id="GO:0005840">
    <property type="term" value="C:ribosome"/>
    <property type="evidence" value="ECO:0007669"/>
    <property type="project" value="UniProtKB-KW"/>
</dbReference>
<dbReference type="GO" id="GO:0019843">
    <property type="term" value="F:rRNA binding"/>
    <property type="evidence" value="ECO:0007669"/>
    <property type="project" value="UniProtKB-UniRule"/>
</dbReference>
<dbReference type="GO" id="GO:0003735">
    <property type="term" value="F:structural constituent of ribosome"/>
    <property type="evidence" value="ECO:0007669"/>
    <property type="project" value="InterPro"/>
</dbReference>
<dbReference type="GO" id="GO:0006412">
    <property type="term" value="P:translation"/>
    <property type="evidence" value="ECO:0007669"/>
    <property type="project" value="UniProtKB-UniRule"/>
</dbReference>
<dbReference type="Gene3D" id="3.10.430.100">
    <property type="entry name" value="Ribosomal protein L9, C-terminal domain"/>
    <property type="match status" value="1"/>
</dbReference>
<dbReference type="Gene3D" id="3.40.5.10">
    <property type="entry name" value="Ribosomal protein L9, N-terminal domain"/>
    <property type="match status" value="1"/>
</dbReference>
<dbReference type="HAMAP" id="MF_00503">
    <property type="entry name" value="Ribosomal_bL9"/>
    <property type="match status" value="1"/>
</dbReference>
<dbReference type="InterPro" id="IPR000244">
    <property type="entry name" value="Ribosomal_bL9"/>
</dbReference>
<dbReference type="InterPro" id="IPR009027">
    <property type="entry name" value="Ribosomal_bL9/RNase_H1_N"/>
</dbReference>
<dbReference type="InterPro" id="IPR020594">
    <property type="entry name" value="Ribosomal_bL9_bac/chp"/>
</dbReference>
<dbReference type="InterPro" id="IPR020069">
    <property type="entry name" value="Ribosomal_bL9_C"/>
</dbReference>
<dbReference type="InterPro" id="IPR036791">
    <property type="entry name" value="Ribosomal_bL9_C_sf"/>
</dbReference>
<dbReference type="InterPro" id="IPR020070">
    <property type="entry name" value="Ribosomal_bL9_N"/>
</dbReference>
<dbReference type="InterPro" id="IPR036935">
    <property type="entry name" value="Ribosomal_bL9_N_sf"/>
</dbReference>
<dbReference type="NCBIfam" id="TIGR00158">
    <property type="entry name" value="L9"/>
    <property type="match status" value="1"/>
</dbReference>
<dbReference type="PANTHER" id="PTHR21368">
    <property type="entry name" value="50S RIBOSOMAL PROTEIN L9"/>
    <property type="match status" value="1"/>
</dbReference>
<dbReference type="Pfam" id="PF03948">
    <property type="entry name" value="Ribosomal_L9_C"/>
    <property type="match status" value="1"/>
</dbReference>
<dbReference type="Pfam" id="PF01281">
    <property type="entry name" value="Ribosomal_L9_N"/>
    <property type="match status" value="1"/>
</dbReference>
<dbReference type="SUPFAM" id="SSF55658">
    <property type="entry name" value="L9 N-domain-like"/>
    <property type="match status" value="1"/>
</dbReference>
<dbReference type="SUPFAM" id="SSF55653">
    <property type="entry name" value="Ribosomal protein L9 C-domain"/>
    <property type="match status" value="1"/>
</dbReference>
<dbReference type="PROSITE" id="PS00651">
    <property type="entry name" value="RIBOSOMAL_L9"/>
    <property type="match status" value="1"/>
</dbReference>
<accession>Q7NRZ0</accession>
<name>RL9_CHRVO</name>
<reference key="1">
    <citation type="journal article" date="2003" name="Proc. Natl. Acad. Sci. U.S.A.">
        <title>The complete genome sequence of Chromobacterium violaceum reveals remarkable and exploitable bacterial adaptability.</title>
        <authorList>
            <person name="Vasconcelos A.T.R."/>
            <person name="de Almeida D.F."/>
            <person name="Hungria M."/>
            <person name="Guimaraes C.T."/>
            <person name="Antonio R.V."/>
            <person name="Almeida F.C."/>
            <person name="de Almeida L.G.P."/>
            <person name="de Almeida R."/>
            <person name="Alves-Gomes J.A."/>
            <person name="Andrade E.M."/>
            <person name="Araripe J."/>
            <person name="de Araujo M.F.F."/>
            <person name="Astolfi-Filho S."/>
            <person name="Azevedo V."/>
            <person name="Baptista A.J."/>
            <person name="Bataus L.A.M."/>
            <person name="Batista J.S."/>
            <person name="Belo A."/>
            <person name="van den Berg C."/>
            <person name="Bogo M."/>
            <person name="Bonatto S."/>
            <person name="Bordignon J."/>
            <person name="Brigido M.M."/>
            <person name="Brito C.A."/>
            <person name="Brocchi M."/>
            <person name="Burity H.A."/>
            <person name="Camargo A.A."/>
            <person name="Cardoso D.D.P."/>
            <person name="Carneiro N.P."/>
            <person name="Carraro D.M."/>
            <person name="Carvalho C.M.B."/>
            <person name="Cascardo J.C.M."/>
            <person name="Cavada B.S."/>
            <person name="Chueire L.M.O."/>
            <person name="Creczynski-Pasa T.B."/>
            <person name="Cunha-Junior N.C."/>
            <person name="Fagundes N."/>
            <person name="Falcao C.L."/>
            <person name="Fantinatti F."/>
            <person name="Farias I.P."/>
            <person name="Felipe M.S.S."/>
            <person name="Ferrari L.P."/>
            <person name="Ferro J.A."/>
            <person name="Ferro M.I.T."/>
            <person name="Franco G.R."/>
            <person name="Freitas N.S.A."/>
            <person name="Furlan L.R."/>
            <person name="Gazzinelli R.T."/>
            <person name="Gomes E.A."/>
            <person name="Goncalves P.R."/>
            <person name="Grangeiro T.B."/>
            <person name="Grattapaglia D."/>
            <person name="Grisard E.C."/>
            <person name="Hanna E.S."/>
            <person name="Jardim S.N."/>
            <person name="Laurino J."/>
            <person name="Leoi L.C.T."/>
            <person name="Lima L.F.A."/>
            <person name="Loureiro M.F."/>
            <person name="Lyra M.C.C.P."/>
            <person name="Madeira H.M.F."/>
            <person name="Manfio G.P."/>
            <person name="Maranhao A.Q."/>
            <person name="Martins W.S."/>
            <person name="di Mauro S.M.Z."/>
            <person name="de Medeiros S.R.B."/>
            <person name="Meissner R.V."/>
            <person name="Moreira M.A.M."/>
            <person name="Nascimento F.F."/>
            <person name="Nicolas M.F."/>
            <person name="Oliveira J.G."/>
            <person name="Oliveira S.C."/>
            <person name="Paixao R.F.C."/>
            <person name="Parente J.A."/>
            <person name="Pedrosa F.O."/>
            <person name="Pena S.D.J."/>
            <person name="Pereira J.O."/>
            <person name="Pereira M."/>
            <person name="Pinto L.S.R.C."/>
            <person name="Pinto L.S."/>
            <person name="Porto J.I.R."/>
            <person name="Potrich D.P."/>
            <person name="Ramalho-Neto C.E."/>
            <person name="Reis A.M.M."/>
            <person name="Rigo L.U."/>
            <person name="Rondinelli E."/>
            <person name="Santos E.B.P."/>
            <person name="Santos F.R."/>
            <person name="Schneider M.P.C."/>
            <person name="Seuanez H.N."/>
            <person name="Silva A.M.R."/>
            <person name="da Silva A.L.C."/>
            <person name="Silva D.W."/>
            <person name="Silva R."/>
            <person name="Simoes I.C."/>
            <person name="Simon D."/>
            <person name="Soares C.M.A."/>
            <person name="Soares R.B.A."/>
            <person name="Souza E.M."/>
            <person name="Souza K.R.L."/>
            <person name="Souza R.C."/>
            <person name="Steffens M.B.R."/>
            <person name="Steindel M."/>
            <person name="Teixeira S.R."/>
            <person name="Urmenyi T."/>
            <person name="Vettore A."/>
            <person name="Wassem R."/>
            <person name="Zaha A."/>
            <person name="Simpson A.J.G."/>
        </authorList>
    </citation>
    <scope>NUCLEOTIDE SEQUENCE [LARGE SCALE GENOMIC DNA]</scope>
    <source>
        <strain>ATCC 12472 / DSM 30191 / JCM 1249 / CCUG 213 / NBRC 12614 / NCIMB 9131 / NCTC 9757 / MK</strain>
    </source>
</reference>
<protein>
    <recommendedName>
        <fullName evidence="1">Large ribosomal subunit protein bL9</fullName>
    </recommendedName>
    <alternativeName>
        <fullName evidence="2">50S ribosomal protein L9</fullName>
    </alternativeName>
</protein>
<keyword id="KW-1185">Reference proteome</keyword>
<keyword id="KW-0687">Ribonucleoprotein</keyword>
<keyword id="KW-0689">Ribosomal protein</keyword>
<keyword id="KW-0694">RNA-binding</keyword>
<keyword id="KW-0699">rRNA-binding</keyword>
<sequence>MQIILLEKVANLGQLGDVVNVKNGFARNFLIPQGKAKRATEANLKEFDARRAELEAKQAEILADAKVRAEKLNEAVITIAQKAGVDGRLFGSVTNVDVAEAVTAFGVQIKRHEVRLPNGPFKAIGEYDIEIALHHDVVTPIKIVVVGEA</sequence>
<organism>
    <name type="scientific">Chromobacterium violaceum (strain ATCC 12472 / DSM 30191 / JCM 1249 / CCUG 213 / NBRC 12614 / NCIMB 9131 / NCTC 9757 / MK)</name>
    <dbReference type="NCBI Taxonomy" id="243365"/>
    <lineage>
        <taxon>Bacteria</taxon>
        <taxon>Pseudomonadati</taxon>
        <taxon>Pseudomonadota</taxon>
        <taxon>Betaproteobacteria</taxon>
        <taxon>Neisseriales</taxon>
        <taxon>Chromobacteriaceae</taxon>
        <taxon>Chromobacterium</taxon>
    </lineage>
</organism>